<protein>
    <recommendedName>
        <fullName evidence="1 12">Protein-lysine N-methyltransferase EFM4</fullName>
        <ecNumber evidence="1 5 6 7">2.1.1.-</ecNumber>
    </recommendedName>
    <alternativeName>
        <fullName evidence="1 10">Elongation factor methyltransferase 4</fullName>
    </alternativeName>
    <alternativeName>
        <fullName evidence="9">Secretion and early endocytosis protein 1</fullName>
    </alternativeName>
</protein>
<comment type="function">
    <text evidence="1 5 6 7">S-adenosyl-L-methionine-dependent protein-lysine N-methyltransferase that mono- and dimethylates elongation factor 1-alpha (TEF1 and TEF2) at 'Lys-316'. May play a role in intracellular transport.</text>
</comment>
<comment type="catalytic activity">
    <reaction evidence="8">
        <text>L-lysyl-[protein] + S-adenosyl-L-methionine = N(6)-methyl-L-lysyl-[protein] + S-adenosyl-L-homocysteine + H(+)</text>
        <dbReference type="Rhea" id="RHEA:51736"/>
        <dbReference type="Rhea" id="RHEA-COMP:9752"/>
        <dbReference type="Rhea" id="RHEA-COMP:13053"/>
        <dbReference type="ChEBI" id="CHEBI:15378"/>
        <dbReference type="ChEBI" id="CHEBI:29969"/>
        <dbReference type="ChEBI" id="CHEBI:57856"/>
        <dbReference type="ChEBI" id="CHEBI:59789"/>
        <dbReference type="ChEBI" id="CHEBI:61929"/>
    </reaction>
</comment>
<comment type="catalytic activity">
    <reaction evidence="8">
        <text>N(6)-methyl-L-lysyl-[protein] + S-adenosyl-L-methionine = N(6),N(6)-dimethyl-L-lysyl-[protein] + S-adenosyl-L-homocysteine + H(+)</text>
        <dbReference type="Rhea" id="RHEA:54196"/>
        <dbReference type="Rhea" id="RHEA-COMP:13053"/>
        <dbReference type="Rhea" id="RHEA-COMP:13827"/>
        <dbReference type="ChEBI" id="CHEBI:15378"/>
        <dbReference type="ChEBI" id="CHEBI:57856"/>
        <dbReference type="ChEBI" id="CHEBI:59789"/>
        <dbReference type="ChEBI" id="CHEBI:61929"/>
        <dbReference type="ChEBI" id="CHEBI:61976"/>
    </reaction>
</comment>
<comment type="subcellular location">
    <subcellularLocation>
        <location evidence="1 2">Cytoplasm</location>
    </subcellularLocation>
</comment>
<comment type="disruption phenotype">
    <text evidence="4">Defects at both very early and later stages of endocytic transport in cells.</text>
</comment>
<comment type="miscellaneous">
    <text evidence="3">Present with 1620 molecules/cell in log phase SD medium.</text>
</comment>
<comment type="similarity">
    <text evidence="1 11">Belongs to the class I-like SAM-binding methyltransferase superfamily. EFM4 family.</text>
</comment>
<comment type="sequence caution" evidence="11">
    <conflict type="erroneous initiation">
        <sequence resource="EMBL-CDS" id="AAT92684"/>
    </conflict>
    <text>Extended N-terminus.</text>
</comment>
<comment type="sequence caution" evidence="11">
    <conflict type="erroneous initiation">
        <sequence resource="EMBL-CDS" id="CAA86159"/>
    </conflict>
    <text>Extended N-terminus.</text>
</comment>
<comment type="sequence caution" evidence="11">
    <conflict type="erroneous initiation">
        <sequence resource="EMBL-CDS" id="DAA08486"/>
    </conflict>
    <text>Extended N-terminus.</text>
</comment>
<gene>
    <name evidence="1 10" type="primary">EFM4</name>
    <name evidence="9" type="synonym">SEE1</name>
    <name evidence="13" type="ordered locus">YIL064W</name>
</gene>
<keyword id="KW-0963">Cytoplasm</keyword>
<keyword id="KW-0489">Methyltransferase</keyword>
<keyword id="KW-1185">Reference proteome</keyword>
<keyword id="KW-0949">S-adenosyl-L-methionine</keyword>
<keyword id="KW-0808">Transferase</keyword>
<keyword id="KW-0813">Transport</keyword>
<proteinExistence type="evidence at protein level"/>
<reference key="1">
    <citation type="journal article" date="1997" name="Nature">
        <title>The nucleotide sequence of Saccharomyces cerevisiae chromosome IX.</title>
        <authorList>
            <person name="Churcher C.M."/>
            <person name="Bowman S."/>
            <person name="Badcock K."/>
            <person name="Bankier A.T."/>
            <person name="Brown D."/>
            <person name="Chillingworth T."/>
            <person name="Connor R."/>
            <person name="Devlin K."/>
            <person name="Gentles S."/>
            <person name="Hamlin N."/>
            <person name="Harris D.E."/>
            <person name="Horsnell T."/>
            <person name="Hunt S."/>
            <person name="Jagels K."/>
            <person name="Jones M."/>
            <person name="Lye G."/>
            <person name="Moule S."/>
            <person name="Odell C."/>
            <person name="Pearson D."/>
            <person name="Rajandream M.A."/>
            <person name="Rice P."/>
            <person name="Rowley N."/>
            <person name="Skelton J."/>
            <person name="Smith V."/>
            <person name="Walsh S.V."/>
            <person name="Whitehead S."/>
            <person name="Barrell B.G."/>
        </authorList>
    </citation>
    <scope>NUCLEOTIDE SEQUENCE [LARGE SCALE GENOMIC DNA]</scope>
    <source>
        <strain>ATCC 204508 / S288c</strain>
    </source>
</reference>
<reference key="2">
    <citation type="journal article" date="2014" name="G3 (Bethesda)">
        <title>The reference genome sequence of Saccharomyces cerevisiae: Then and now.</title>
        <authorList>
            <person name="Engel S.R."/>
            <person name="Dietrich F.S."/>
            <person name="Fisk D.G."/>
            <person name="Binkley G."/>
            <person name="Balakrishnan R."/>
            <person name="Costanzo M.C."/>
            <person name="Dwight S.S."/>
            <person name="Hitz B.C."/>
            <person name="Karra K."/>
            <person name="Nash R.S."/>
            <person name="Weng S."/>
            <person name="Wong E.D."/>
            <person name="Lloyd P."/>
            <person name="Skrzypek M.S."/>
            <person name="Miyasato S.R."/>
            <person name="Simison M."/>
            <person name="Cherry J.M."/>
        </authorList>
    </citation>
    <scope>GENOME REANNOTATION</scope>
    <source>
        <strain>ATCC 204508 / S288c</strain>
    </source>
</reference>
<reference key="3">
    <citation type="journal article" date="2007" name="Genome Res.">
        <title>Approaching a complete repository of sequence-verified protein-encoding clones for Saccharomyces cerevisiae.</title>
        <authorList>
            <person name="Hu Y."/>
            <person name="Rolfs A."/>
            <person name="Bhullar B."/>
            <person name="Murthy T.V.S."/>
            <person name="Zhu C."/>
            <person name="Berger M.F."/>
            <person name="Camargo A.A."/>
            <person name="Kelley F."/>
            <person name="McCarron S."/>
            <person name="Jepson D."/>
            <person name="Richardson A."/>
            <person name="Raphael J."/>
            <person name="Moreira D."/>
            <person name="Taycher E."/>
            <person name="Zuo D."/>
            <person name="Mohr S."/>
            <person name="Kane M.F."/>
            <person name="Williamson J."/>
            <person name="Simpson A.J.G."/>
            <person name="Bulyk M.L."/>
            <person name="Harlow E."/>
            <person name="Marsischky G."/>
            <person name="Kolodner R.D."/>
            <person name="LaBaer J."/>
        </authorList>
    </citation>
    <scope>NUCLEOTIDE SEQUENCE [GENOMIC DNA]</scope>
    <source>
        <strain>ATCC 204508 / S288c</strain>
    </source>
</reference>
<reference key="4">
    <citation type="journal article" date="2003" name="Nature">
        <title>Global analysis of protein localization in budding yeast.</title>
        <authorList>
            <person name="Huh W.-K."/>
            <person name="Falvo J.V."/>
            <person name="Gerke L.C."/>
            <person name="Carroll A.S."/>
            <person name="Howson R.W."/>
            <person name="Weissman J.S."/>
            <person name="O'Shea E.K."/>
        </authorList>
    </citation>
    <scope>SUBCELLULAR LOCATION [LARGE SCALE ANALYSIS]</scope>
</reference>
<reference key="5">
    <citation type="journal article" date="2003" name="Nature">
        <title>Global analysis of protein expression in yeast.</title>
        <authorList>
            <person name="Ghaemmaghami S."/>
            <person name="Huh W.-K."/>
            <person name="Bower K."/>
            <person name="Howson R.W."/>
            <person name="Belle A."/>
            <person name="Dephoure N."/>
            <person name="O'Shea E.K."/>
            <person name="Weissman J.S."/>
        </authorList>
    </citation>
    <scope>LEVEL OF PROTEIN EXPRESSION [LARGE SCALE ANALYSIS]</scope>
</reference>
<reference key="6">
    <citation type="journal article" date="2008" name="Yeast">
        <title>Absence of See1p, a widely conserved Saccharomyces cerevisiae protein, confers both deficient heterologous protein production and endocytosis.</title>
        <authorList>
            <person name="Martin-Granados C."/>
            <person name="Riechers S.P."/>
            <person name="Stahl U."/>
            <person name="Lang C."/>
        </authorList>
    </citation>
    <scope>DISRUPTION PHENOTYPE</scope>
</reference>
<reference key="7">
    <citation type="journal article" date="2010" name="Arch. Biochem. Biophys.">
        <title>Two novel methyltransferases acting upon eukaryotic elongation factor 1A in Saccharomyces cerevisiae.</title>
        <authorList>
            <person name="Lipson R.S."/>
            <person name="Webb K.J."/>
            <person name="Clarke S.G."/>
        </authorList>
    </citation>
    <scope>FUNCTION</scope>
</reference>
<reference key="8">
    <citation type="journal article" date="2012" name="Proteomics">
        <title>Methylation of translation-associated proteins in Saccharomyces cerevisiae: Identification of methylated lysines and their methyltransferases.</title>
        <authorList>
            <person name="Couttas T.A."/>
            <person name="Raftery M.J."/>
            <person name="Padula M.P."/>
            <person name="Herbert B.R."/>
            <person name="Wilkins M.R."/>
        </authorList>
    </citation>
    <scope>FUNCTION</scope>
</reference>
<reference key="9">
    <citation type="journal article" date="2014" name="J. Biol. Chem.">
        <title>Translational roles of elongation factor 2 protein lysine methylation.</title>
        <authorList>
            <person name="Dzialo M.C."/>
            <person name="Travaglini K.J."/>
            <person name="Shen S."/>
            <person name="Roy K."/>
            <person name="Chanfreau G.F."/>
            <person name="Loo J.A."/>
            <person name="Clarke S.G."/>
        </authorList>
    </citation>
    <scope>GENE NAME</scope>
</reference>
<reference key="10">
    <citation type="journal article" date="2014" name="J. Proteome Res.">
        <title>Stoichiometry of Saccharomyces cerevisiae lysine methylation: insights into non-histone protein lysine methyltransferase activity.</title>
        <authorList>
            <person name="Hart-Smith G."/>
            <person name="Chia S.Z."/>
            <person name="Low J.K."/>
            <person name="McKay M.J."/>
            <person name="Molloy M.P."/>
            <person name="Wilkins M.R."/>
        </authorList>
    </citation>
    <scope>FUNCTION</scope>
</reference>
<reference key="11">
    <citation type="journal article" date="2024" name="J. Biol. Chem.">
        <title>Methylation of elongation factor 1A by yeast Efm4 or human eEF1A-KMT2 involves a beta-hairpin recognition motif and crosstalks with phosphorylation.</title>
        <authorList>
            <person name="Hamey J.J."/>
            <person name="Nguyen A."/>
            <person name="Haddad M."/>
            <person name="Vazquez-Campos X."/>
            <person name="Pfeiffer P.G."/>
            <person name="Wilkins M.R."/>
        </authorList>
    </citation>
    <scope>IDENTIFICATION OF PROBABLE INITIATION SITE</scope>
    <scope>FUNCTION</scope>
    <scope>CATALYTIC ACTIVITY</scope>
    <scope>MUTAGENESIS OF PHE-210 AND PHE-212</scope>
</reference>
<accession>P40516</accession>
<accession>D6VVM0</accession>
<accession>Q6B2R5</accession>
<sequence>MQGTADLSTSKLGTKKYWDELYALELENFRRNPQDTGDCWFSDSDAEQKMIDFLVDNIGAYRISENASVVDLGTGNGHMLFELHQTEFQGKLVGIDYSEESVKLASNIAEATGVDNFISFQQADIFSGDWKPGKYDIVLDKGTLDAISLSGMKINGKLDVVDVYAGVVERILKKDGIFLITSCNFTQDELVKIIETDNLKMWKTIKYPVFQFGGVQGATICSVAFVKQN</sequence>
<dbReference type="EC" id="2.1.1.-" evidence="1 5 6 7"/>
<dbReference type="EMBL" id="Z38060">
    <property type="protein sequence ID" value="CAA86159.1"/>
    <property type="status" value="ALT_INIT"/>
    <property type="molecule type" value="Genomic_DNA"/>
</dbReference>
<dbReference type="EMBL" id="AY692665">
    <property type="protein sequence ID" value="AAT92684.1"/>
    <property type="status" value="ALT_INIT"/>
    <property type="molecule type" value="Genomic_DNA"/>
</dbReference>
<dbReference type="EMBL" id="BK006942">
    <property type="protein sequence ID" value="DAA08486.1"/>
    <property type="status" value="ALT_INIT"/>
    <property type="molecule type" value="Genomic_DNA"/>
</dbReference>
<dbReference type="PIR" id="S48415">
    <property type="entry name" value="S48415"/>
</dbReference>
<dbReference type="RefSeq" id="NP_012200.2">
    <property type="nucleotide sequence ID" value="NM_001179414.2"/>
</dbReference>
<dbReference type="SMR" id="P40516"/>
<dbReference type="BioGRID" id="34928">
    <property type="interactions" value="106"/>
</dbReference>
<dbReference type="DIP" id="DIP-5648N"/>
<dbReference type="FunCoup" id="P40516">
    <property type="interactions" value="840"/>
</dbReference>
<dbReference type="STRING" id="4932.YIL064W"/>
<dbReference type="iPTMnet" id="P40516"/>
<dbReference type="PaxDb" id="4932-YIL064W"/>
<dbReference type="PeptideAtlas" id="P40516"/>
<dbReference type="EnsemblFungi" id="YIL064W_mRNA">
    <property type="protein sequence ID" value="YIL064W"/>
    <property type="gene ID" value="YIL064W"/>
</dbReference>
<dbReference type="GeneID" id="854746"/>
<dbReference type="AGR" id="SGD:S000001326"/>
<dbReference type="SGD" id="S000001326">
    <property type="gene designation" value="EFM4"/>
</dbReference>
<dbReference type="VEuPathDB" id="FungiDB:YIL064W"/>
<dbReference type="eggNOG" id="KOG1271">
    <property type="taxonomic scope" value="Eukaryota"/>
</dbReference>
<dbReference type="GeneTree" id="ENSGT00390000013399"/>
<dbReference type="HOGENOM" id="CLU_044783_1_0_1"/>
<dbReference type="InParanoid" id="P40516"/>
<dbReference type="OMA" id="PTPSFQF"/>
<dbReference type="OrthoDB" id="10069295at2759"/>
<dbReference type="BioCyc" id="YEAST:G3O-31332-MONOMER"/>
<dbReference type="Reactome" id="R-SCE-8876725">
    <property type="pathway name" value="Protein methylation"/>
</dbReference>
<dbReference type="BioGRID-ORCS" id="854746">
    <property type="hits" value="8 hits in 10 CRISPR screens"/>
</dbReference>
<dbReference type="PRO" id="PR:P40516"/>
<dbReference type="Proteomes" id="UP000002311">
    <property type="component" value="Chromosome IX"/>
</dbReference>
<dbReference type="RNAct" id="P40516">
    <property type="molecule type" value="protein"/>
</dbReference>
<dbReference type="GO" id="GO:0005737">
    <property type="term" value="C:cytoplasm"/>
    <property type="evidence" value="ECO:0007005"/>
    <property type="project" value="SGD"/>
</dbReference>
<dbReference type="GO" id="GO:0016279">
    <property type="term" value="F:protein-lysine N-methyltransferase activity"/>
    <property type="evidence" value="ECO:0000314"/>
    <property type="project" value="SGD"/>
</dbReference>
<dbReference type="GO" id="GO:0032259">
    <property type="term" value="P:methylation"/>
    <property type="evidence" value="ECO:0007669"/>
    <property type="project" value="UniProtKB-KW"/>
</dbReference>
<dbReference type="GO" id="GO:0016192">
    <property type="term" value="P:vesicle-mediated transport"/>
    <property type="evidence" value="ECO:0007669"/>
    <property type="project" value="UniProtKB-UniRule"/>
</dbReference>
<dbReference type="CDD" id="cd02440">
    <property type="entry name" value="AdoMet_MTases"/>
    <property type="match status" value="1"/>
</dbReference>
<dbReference type="FunFam" id="3.40.50.150:FF:000287">
    <property type="entry name" value="Protein-lysine N-methyltransferase EFM4"/>
    <property type="match status" value="1"/>
</dbReference>
<dbReference type="Gene3D" id="3.40.50.150">
    <property type="entry name" value="Vaccinia Virus protein VP39"/>
    <property type="match status" value="1"/>
</dbReference>
<dbReference type="HAMAP" id="MF_03188">
    <property type="entry name" value="Methyltr_EFM4"/>
    <property type="match status" value="1"/>
</dbReference>
<dbReference type="InterPro" id="IPR026635">
    <property type="entry name" value="Efm4/METTL10"/>
</dbReference>
<dbReference type="InterPro" id="IPR025714">
    <property type="entry name" value="Methyltranfer_dom"/>
</dbReference>
<dbReference type="InterPro" id="IPR029063">
    <property type="entry name" value="SAM-dependent_MTases_sf"/>
</dbReference>
<dbReference type="PANTHER" id="PTHR12843:SF5">
    <property type="entry name" value="EEF1A LYSINE METHYLTRANSFERASE 2"/>
    <property type="match status" value="1"/>
</dbReference>
<dbReference type="PANTHER" id="PTHR12843">
    <property type="entry name" value="PROTEIN-LYSINE N-METHYLTRANSFERASE METTL10"/>
    <property type="match status" value="1"/>
</dbReference>
<dbReference type="Pfam" id="PF13847">
    <property type="entry name" value="Methyltransf_31"/>
    <property type="match status" value="1"/>
</dbReference>
<dbReference type="SUPFAM" id="SSF53335">
    <property type="entry name" value="S-adenosyl-L-methionine-dependent methyltransferases"/>
    <property type="match status" value="1"/>
</dbReference>
<name>EFM4_YEAST</name>
<feature type="chain" id="PRO_0000202983" description="Protein-lysine N-methyltransferase EFM4">
    <location>
        <begin position="1"/>
        <end position="229"/>
    </location>
</feature>
<feature type="mutagenesis site" description="Reduces elongation factor 1-alpha methylation, with a substantial portion of 'Lys-316' being un- and mono-methylated." evidence="8">
    <original>F</original>
    <variation>A</variation>
    <location>
        <position position="210"/>
    </location>
</feature>
<feature type="mutagenesis site" description="Complete loss of elongation factor 1-alpha 'Lys-316' methylation." evidence="8">
    <original>F</original>
    <variation>A</variation>
    <location>
        <position position="212"/>
    </location>
</feature>
<feature type="sequence conflict" description="In Ref. 3; AAT92684." evidence="11" ref="3">
    <original>N</original>
    <variation>S</variation>
    <location>
        <position position="76"/>
    </location>
</feature>
<organism>
    <name type="scientific">Saccharomyces cerevisiae (strain ATCC 204508 / S288c)</name>
    <name type="common">Baker's yeast</name>
    <dbReference type="NCBI Taxonomy" id="559292"/>
    <lineage>
        <taxon>Eukaryota</taxon>
        <taxon>Fungi</taxon>
        <taxon>Dikarya</taxon>
        <taxon>Ascomycota</taxon>
        <taxon>Saccharomycotina</taxon>
        <taxon>Saccharomycetes</taxon>
        <taxon>Saccharomycetales</taxon>
        <taxon>Saccharomycetaceae</taxon>
        <taxon>Saccharomyces</taxon>
    </lineage>
</organism>
<evidence type="ECO:0000255" key="1">
    <source>
        <dbReference type="HAMAP-Rule" id="MF_03188"/>
    </source>
</evidence>
<evidence type="ECO:0000269" key="2">
    <source>
    </source>
</evidence>
<evidence type="ECO:0000269" key="3">
    <source>
    </source>
</evidence>
<evidence type="ECO:0000269" key="4">
    <source>
    </source>
</evidence>
<evidence type="ECO:0000269" key="5">
    <source>
    </source>
</evidence>
<evidence type="ECO:0000269" key="6">
    <source>
    </source>
</evidence>
<evidence type="ECO:0000269" key="7">
    <source>
    </source>
</evidence>
<evidence type="ECO:0000269" key="8">
    <source>
    </source>
</evidence>
<evidence type="ECO:0000303" key="9">
    <source>
    </source>
</evidence>
<evidence type="ECO:0000303" key="10">
    <source>
    </source>
</evidence>
<evidence type="ECO:0000305" key="11"/>
<evidence type="ECO:0000305" key="12">
    <source>
    </source>
</evidence>
<evidence type="ECO:0000312" key="13">
    <source>
        <dbReference type="SGD" id="S000001326"/>
    </source>
</evidence>